<protein>
    <recommendedName>
        <fullName evidence="1">GTPase Era</fullName>
    </recommendedName>
</protein>
<organism>
    <name type="scientific">Staphylococcus epidermidis (strain ATCC 35984 / DSM 28319 / BCRC 17069 / CCUG 31568 / BM 3577 / RP62A)</name>
    <dbReference type="NCBI Taxonomy" id="176279"/>
    <lineage>
        <taxon>Bacteria</taxon>
        <taxon>Bacillati</taxon>
        <taxon>Bacillota</taxon>
        <taxon>Bacilli</taxon>
        <taxon>Bacillales</taxon>
        <taxon>Staphylococcaceae</taxon>
        <taxon>Staphylococcus</taxon>
    </lineage>
</organism>
<accession>Q5HNY0</accession>
<comment type="function">
    <text evidence="1">An essential GTPase that binds both GDP and GTP, with rapid nucleotide exchange. Plays a role in 16S rRNA processing and 30S ribosomal subunit biogenesis and possibly also in cell cycle regulation and energy metabolism.</text>
</comment>
<comment type="subunit">
    <text evidence="1">Monomer.</text>
</comment>
<comment type="subcellular location">
    <subcellularLocation>
        <location>Cytoplasm</location>
    </subcellularLocation>
    <subcellularLocation>
        <location evidence="1">Cell membrane</location>
        <topology evidence="1">Peripheral membrane protein</topology>
    </subcellularLocation>
</comment>
<comment type="similarity">
    <text evidence="1 2">Belongs to the TRAFAC class TrmE-Era-EngA-EngB-Septin-like GTPase superfamily. Era GTPase family.</text>
</comment>
<evidence type="ECO:0000255" key="1">
    <source>
        <dbReference type="HAMAP-Rule" id="MF_00367"/>
    </source>
</evidence>
<evidence type="ECO:0000255" key="2">
    <source>
        <dbReference type="PROSITE-ProRule" id="PRU01050"/>
    </source>
</evidence>
<dbReference type="EMBL" id="CP000029">
    <property type="protein sequence ID" value="AAW54455.1"/>
    <property type="molecule type" value="Genomic_DNA"/>
</dbReference>
<dbReference type="RefSeq" id="WP_002486238.1">
    <property type="nucleotide sequence ID" value="NC_002976.3"/>
</dbReference>
<dbReference type="SMR" id="Q5HNY0"/>
<dbReference type="STRING" id="176279.SERP1134"/>
<dbReference type="KEGG" id="ser:SERP1134"/>
<dbReference type="eggNOG" id="COG1159">
    <property type="taxonomic scope" value="Bacteria"/>
</dbReference>
<dbReference type="HOGENOM" id="CLU_038009_1_0_9"/>
<dbReference type="Proteomes" id="UP000000531">
    <property type="component" value="Chromosome"/>
</dbReference>
<dbReference type="GO" id="GO:0005829">
    <property type="term" value="C:cytosol"/>
    <property type="evidence" value="ECO:0007669"/>
    <property type="project" value="TreeGrafter"/>
</dbReference>
<dbReference type="GO" id="GO:0005886">
    <property type="term" value="C:plasma membrane"/>
    <property type="evidence" value="ECO:0007669"/>
    <property type="project" value="UniProtKB-SubCell"/>
</dbReference>
<dbReference type="GO" id="GO:0005525">
    <property type="term" value="F:GTP binding"/>
    <property type="evidence" value="ECO:0007669"/>
    <property type="project" value="UniProtKB-UniRule"/>
</dbReference>
<dbReference type="GO" id="GO:0003924">
    <property type="term" value="F:GTPase activity"/>
    <property type="evidence" value="ECO:0007669"/>
    <property type="project" value="UniProtKB-UniRule"/>
</dbReference>
<dbReference type="GO" id="GO:0043024">
    <property type="term" value="F:ribosomal small subunit binding"/>
    <property type="evidence" value="ECO:0007669"/>
    <property type="project" value="TreeGrafter"/>
</dbReference>
<dbReference type="GO" id="GO:0070181">
    <property type="term" value="F:small ribosomal subunit rRNA binding"/>
    <property type="evidence" value="ECO:0007669"/>
    <property type="project" value="UniProtKB-UniRule"/>
</dbReference>
<dbReference type="GO" id="GO:0000028">
    <property type="term" value="P:ribosomal small subunit assembly"/>
    <property type="evidence" value="ECO:0007669"/>
    <property type="project" value="TreeGrafter"/>
</dbReference>
<dbReference type="CDD" id="cd04163">
    <property type="entry name" value="Era"/>
    <property type="match status" value="1"/>
</dbReference>
<dbReference type="CDD" id="cd22534">
    <property type="entry name" value="KH-II_Era"/>
    <property type="match status" value="1"/>
</dbReference>
<dbReference type="FunFam" id="3.30.300.20:FF:000003">
    <property type="entry name" value="GTPase Era"/>
    <property type="match status" value="1"/>
</dbReference>
<dbReference type="FunFam" id="3.40.50.300:FF:000094">
    <property type="entry name" value="GTPase Era"/>
    <property type="match status" value="1"/>
</dbReference>
<dbReference type="Gene3D" id="3.30.300.20">
    <property type="match status" value="1"/>
</dbReference>
<dbReference type="Gene3D" id="3.40.50.300">
    <property type="entry name" value="P-loop containing nucleotide triphosphate hydrolases"/>
    <property type="match status" value="1"/>
</dbReference>
<dbReference type="HAMAP" id="MF_00367">
    <property type="entry name" value="GTPase_Era"/>
    <property type="match status" value="1"/>
</dbReference>
<dbReference type="InterPro" id="IPR030388">
    <property type="entry name" value="G_ERA_dom"/>
</dbReference>
<dbReference type="InterPro" id="IPR006073">
    <property type="entry name" value="GTP-bd"/>
</dbReference>
<dbReference type="InterPro" id="IPR005662">
    <property type="entry name" value="GTPase_Era-like"/>
</dbReference>
<dbReference type="InterPro" id="IPR015946">
    <property type="entry name" value="KH_dom-like_a/b"/>
</dbReference>
<dbReference type="InterPro" id="IPR004044">
    <property type="entry name" value="KH_dom_type_2"/>
</dbReference>
<dbReference type="InterPro" id="IPR009019">
    <property type="entry name" value="KH_sf_prok-type"/>
</dbReference>
<dbReference type="InterPro" id="IPR027417">
    <property type="entry name" value="P-loop_NTPase"/>
</dbReference>
<dbReference type="InterPro" id="IPR005225">
    <property type="entry name" value="Small_GTP-bd"/>
</dbReference>
<dbReference type="NCBIfam" id="TIGR00436">
    <property type="entry name" value="era"/>
    <property type="match status" value="1"/>
</dbReference>
<dbReference type="NCBIfam" id="NF000908">
    <property type="entry name" value="PRK00089.1"/>
    <property type="match status" value="1"/>
</dbReference>
<dbReference type="NCBIfam" id="TIGR00231">
    <property type="entry name" value="small_GTP"/>
    <property type="match status" value="1"/>
</dbReference>
<dbReference type="PANTHER" id="PTHR42698">
    <property type="entry name" value="GTPASE ERA"/>
    <property type="match status" value="1"/>
</dbReference>
<dbReference type="PANTHER" id="PTHR42698:SF1">
    <property type="entry name" value="GTPASE ERA, MITOCHONDRIAL"/>
    <property type="match status" value="1"/>
</dbReference>
<dbReference type="Pfam" id="PF07650">
    <property type="entry name" value="KH_2"/>
    <property type="match status" value="1"/>
</dbReference>
<dbReference type="Pfam" id="PF01926">
    <property type="entry name" value="MMR_HSR1"/>
    <property type="match status" value="1"/>
</dbReference>
<dbReference type="SUPFAM" id="SSF52540">
    <property type="entry name" value="P-loop containing nucleoside triphosphate hydrolases"/>
    <property type="match status" value="1"/>
</dbReference>
<dbReference type="SUPFAM" id="SSF54814">
    <property type="entry name" value="Prokaryotic type KH domain (KH-domain type II)"/>
    <property type="match status" value="1"/>
</dbReference>
<dbReference type="PROSITE" id="PS51713">
    <property type="entry name" value="G_ERA"/>
    <property type="match status" value="1"/>
</dbReference>
<dbReference type="PROSITE" id="PS50823">
    <property type="entry name" value="KH_TYPE_2"/>
    <property type="match status" value="1"/>
</dbReference>
<name>ERA_STAEQ</name>
<gene>
    <name evidence="1" type="primary">era</name>
    <name type="ordered locus">SERP1134</name>
</gene>
<feature type="chain" id="PRO_0000180053" description="GTPase Era">
    <location>
        <begin position="1"/>
        <end position="299"/>
    </location>
</feature>
<feature type="domain" description="Era-type G" evidence="2">
    <location>
        <begin position="5"/>
        <end position="172"/>
    </location>
</feature>
<feature type="domain" description="KH type-2" evidence="1">
    <location>
        <begin position="203"/>
        <end position="280"/>
    </location>
</feature>
<feature type="region of interest" description="G1" evidence="2">
    <location>
        <begin position="13"/>
        <end position="20"/>
    </location>
</feature>
<feature type="region of interest" description="G2" evidence="2">
    <location>
        <begin position="39"/>
        <end position="43"/>
    </location>
</feature>
<feature type="region of interest" description="G3" evidence="2">
    <location>
        <begin position="60"/>
        <end position="63"/>
    </location>
</feature>
<feature type="region of interest" description="G4" evidence="2">
    <location>
        <begin position="122"/>
        <end position="125"/>
    </location>
</feature>
<feature type="region of interest" description="G5" evidence="2">
    <location>
        <begin position="151"/>
        <end position="153"/>
    </location>
</feature>
<feature type="binding site" evidence="1">
    <location>
        <begin position="13"/>
        <end position="20"/>
    </location>
    <ligand>
        <name>GTP</name>
        <dbReference type="ChEBI" id="CHEBI:37565"/>
    </ligand>
</feature>
<feature type="binding site" evidence="1">
    <location>
        <begin position="60"/>
        <end position="64"/>
    </location>
    <ligand>
        <name>GTP</name>
        <dbReference type="ChEBI" id="CHEBI:37565"/>
    </ligand>
</feature>
<feature type="binding site" evidence="1">
    <location>
        <begin position="122"/>
        <end position="125"/>
    </location>
    <ligand>
        <name>GTP</name>
        <dbReference type="ChEBI" id="CHEBI:37565"/>
    </ligand>
</feature>
<sequence>MTEHKSGFVSIIGRPNVGKSTFVNRVIGHKIAIMSDKAQTTRNKIQGVMTRDDAQIIFIDTPGIHKPKHKLGDYMMRVAKNTLSEIDAIMFMVNVNEDIGRGDEYIMEMLKNVKTPIFLVLNKIDLVHPDTLMPKIEQYQSYMDFTDIIPISALEGLNVDHFIDVLKSFLPEGPKYYPDNQISDHPEQFVVSEIIREKILHLTSEEIPHAIGVNVDRMIKEDEDRVRIETTIYVERDSQKGIVIGKGGKKLKEVGKRARRDIEMLLGSKVYLELWVKVQRDWRNKVNFIRQIGYVEDQD</sequence>
<keyword id="KW-1003">Cell membrane</keyword>
<keyword id="KW-0963">Cytoplasm</keyword>
<keyword id="KW-0342">GTP-binding</keyword>
<keyword id="KW-0472">Membrane</keyword>
<keyword id="KW-0547">Nucleotide-binding</keyword>
<keyword id="KW-1185">Reference proteome</keyword>
<keyword id="KW-0690">Ribosome biogenesis</keyword>
<keyword id="KW-0694">RNA-binding</keyword>
<keyword id="KW-0699">rRNA-binding</keyword>
<proteinExistence type="inferred from homology"/>
<reference key="1">
    <citation type="journal article" date="2005" name="J. Bacteriol.">
        <title>Insights on evolution of virulence and resistance from the complete genome analysis of an early methicillin-resistant Staphylococcus aureus strain and a biofilm-producing methicillin-resistant Staphylococcus epidermidis strain.</title>
        <authorList>
            <person name="Gill S.R."/>
            <person name="Fouts D.E."/>
            <person name="Archer G.L."/>
            <person name="Mongodin E.F."/>
            <person name="DeBoy R.T."/>
            <person name="Ravel J."/>
            <person name="Paulsen I.T."/>
            <person name="Kolonay J.F."/>
            <person name="Brinkac L.M."/>
            <person name="Beanan M.J."/>
            <person name="Dodson R.J."/>
            <person name="Daugherty S.C."/>
            <person name="Madupu R."/>
            <person name="Angiuoli S.V."/>
            <person name="Durkin A.S."/>
            <person name="Haft D.H."/>
            <person name="Vamathevan J.J."/>
            <person name="Khouri H."/>
            <person name="Utterback T.R."/>
            <person name="Lee C."/>
            <person name="Dimitrov G."/>
            <person name="Jiang L."/>
            <person name="Qin H."/>
            <person name="Weidman J."/>
            <person name="Tran K."/>
            <person name="Kang K.H."/>
            <person name="Hance I.R."/>
            <person name="Nelson K.E."/>
            <person name="Fraser C.M."/>
        </authorList>
    </citation>
    <scope>NUCLEOTIDE SEQUENCE [LARGE SCALE GENOMIC DNA]</scope>
    <source>
        <strain>ATCC 35984 / DSM 28319 / BCRC 17069 / CCUG 31568 / BM 3577 / RP62A</strain>
    </source>
</reference>